<name>GATB_AZOC5</name>
<sequence length="492" mass="53862">MTAHVRPTDAKKLIKGATGNWEVVIGMEIHAQVSSNAKLFSGASTAFGGPPNDHVSLVDAAMPGMLPVINKECVAQAVRTGLGLRAQINLRSTFDRKNYFYPDLPQGYQISQYKSPIVGEGEVIVDLLDGESFVVGIERLHLEQDAGKSIHDLSPTLSFVDLNRSGVALMEIVSRPDLRSSEEARAYVTKLRSILRYLGTCDGDMEKGNLRADVNVSVRRPGEPLGTRCEIKNVNSIRFIGQAIEVEARRQIEILEDGGVIDQETRLFDPNKGETRSMRSKEEAHDYRYFPDPDLLPLVLHADFVEELKSHLPELPDEKKARFIADYGLSPYDASVLVAERDTADYFEQVAKGRDGKAAANFVINELFGRLNKDGKDVITSPVSPAQVAAIVDLIGEGVISSKIAKDLFEIVYTEGGDPRVLVEERGLKQVTDTGAIEKVVDEIIAANPDKVAQVQAKPTMLGWFVGQAMKASGGKANPQALNDILKRKLGI</sequence>
<comment type="function">
    <text evidence="1">Allows the formation of correctly charged Asn-tRNA(Asn) or Gln-tRNA(Gln) through the transamidation of misacylated Asp-tRNA(Asn) or Glu-tRNA(Gln) in organisms which lack either or both of asparaginyl-tRNA or glutaminyl-tRNA synthetases. The reaction takes place in the presence of glutamine and ATP through an activated phospho-Asp-tRNA(Asn) or phospho-Glu-tRNA(Gln).</text>
</comment>
<comment type="catalytic activity">
    <reaction evidence="1">
        <text>L-glutamyl-tRNA(Gln) + L-glutamine + ATP + H2O = L-glutaminyl-tRNA(Gln) + L-glutamate + ADP + phosphate + H(+)</text>
        <dbReference type="Rhea" id="RHEA:17521"/>
        <dbReference type="Rhea" id="RHEA-COMP:9681"/>
        <dbReference type="Rhea" id="RHEA-COMP:9684"/>
        <dbReference type="ChEBI" id="CHEBI:15377"/>
        <dbReference type="ChEBI" id="CHEBI:15378"/>
        <dbReference type="ChEBI" id="CHEBI:29985"/>
        <dbReference type="ChEBI" id="CHEBI:30616"/>
        <dbReference type="ChEBI" id="CHEBI:43474"/>
        <dbReference type="ChEBI" id="CHEBI:58359"/>
        <dbReference type="ChEBI" id="CHEBI:78520"/>
        <dbReference type="ChEBI" id="CHEBI:78521"/>
        <dbReference type="ChEBI" id="CHEBI:456216"/>
    </reaction>
</comment>
<comment type="catalytic activity">
    <reaction evidence="1">
        <text>L-aspartyl-tRNA(Asn) + L-glutamine + ATP + H2O = L-asparaginyl-tRNA(Asn) + L-glutamate + ADP + phosphate + 2 H(+)</text>
        <dbReference type="Rhea" id="RHEA:14513"/>
        <dbReference type="Rhea" id="RHEA-COMP:9674"/>
        <dbReference type="Rhea" id="RHEA-COMP:9677"/>
        <dbReference type="ChEBI" id="CHEBI:15377"/>
        <dbReference type="ChEBI" id="CHEBI:15378"/>
        <dbReference type="ChEBI" id="CHEBI:29985"/>
        <dbReference type="ChEBI" id="CHEBI:30616"/>
        <dbReference type="ChEBI" id="CHEBI:43474"/>
        <dbReference type="ChEBI" id="CHEBI:58359"/>
        <dbReference type="ChEBI" id="CHEBI:78515"/>
        <dbReference type="ChEBI" id="CHEBI:78516"/>
        <dbReference type="ChEBI" id="CHEBI:456216"/>
    </reaction>
</comment>
<comment type="subunit">
    <text evidence="1">Heterotrimer of A, B and C subunits.</text>
</comment>
<comment type="similarity">
    <text evidence="1">Belongs to the GatB/GatE family. GatB subfamily.</text>
</comment>
<reference key="1">
    <citation type="submission" date="2007-04" db="EMBL/GenBank/DDBJ databases">
        <title>Complete genome sequence of the nitrogen-fixing bacterium Azorhizobium caulinodans ORS571.</title>
        <authorList>
            <person name="Lee K.B."/>
            <person name="Backer P.D."/>
            <person name="Aono T."/>
            <person name="Liu C.T."/>
            <person name="Suzuki S."/>
            <person name="Suzuki T."/>
            <person name="Kaneko T."/>
            <person name="Yamada M."/>
            <person name="Tabata S."/>
            <person name="Kupfer D.M."/>
            <person name="Najar F.Z."/>
            <person name="Wiley G.B."/>
            <person name="Roe B."/>
            <person name="Binnewies T."/>
            <person name="Ussery D."/>
            <person name="Vereecke D."/>
            <person name="Gevers D."/>
            <person name="Holsters M."/>
            <person name="Oyaizu H."/>
        </authorList>
    </citation>
    <scope>NUCLEOTIDE SEQUENCE [LARGE SCALE GENOMIC DNA]</scope>
    <source>
        <strain>ATCC 43989 / DSM 5975 / JCM 20966 / LMG 6465 / NBRC 14845 / NCIMB 13405 / ORS 571</strain>
    </source>
</reference>
<accession>A8ICV0</accession>
<dbReference type="EC" id="6.3.5.-" evidence="1"/>
<dbReference type="EMBL" id="AP009384">
    <property type="protein sequence ID" value="BAF88845.1"/>
    <property type="molecule type" value="Genomic_DNA"/>
</dbReference>
<dbReference type="RefSeq" id="WP_012171371.1">
    <property type="nucleotide sequence ID" value="NC_009937.1"/>
</dbReference>
<dbReference type="SMR" id="A8ICV0"/>
<dbReference type="STRING" id="438753.AZC_2847"/>
<dbReference type="KEGG" id="azc:AZC_2847"/>
<dbReference type="eggNOG" id="COG0064">
    <property type="taxonomic scope" value="Bacteria"/>
</dbReference>
<dbReference type="HOGENOM" id="CLU_019240_0_0_5"/>
<dbReference type="Proteomes" id="UP000000270">
    <property type="component" value="Chromosome"/>
</dbReference>
<dbReference type="GO" id="GO:0050566">
    <property type="term" value="F:asparaginyl-tRNA synthase (glutamine-hydrolyzing) activity"/>
    <property type="evidence" value="ECO:0007669"/>
    <property type="project" value="RHEA"/>
</dbReference>
<dbReference type="GO" id="GO:0005524">
    <property type="term" value="F:ATP binding"/>
    <property type="evidence" value="ECO:0007669"/>
    <property type="project" value="UniProtKB-KW"/>
</dbReference>
<dbReference type="GO" id="GO:0050567">
    <property type="term" value="F:glutaminyl-tRNA synthase (glutamine-hydrolyzing) activity"/>
    <property type="evidence" value="ECO:0007669"/>
    <property type="project" value="UniProtKB-UniRule"/>
</dbReference>
<dbReference type="GO" id="GO:0070681">
    <property type="term" value="P:glutaminyl-tRNAGln biosynthesis via transamidation"/>
    <property type="evidence" value="ECO:0007669"/>
    <property type="project" value="TreeGrafter"/>
</dbReference>
<dbReference type="GO" id="GO:0006412">
    <property type="term" value="P:translation"/>
    <property type="evidence" value="ECO:0007669"/>
    <property type="project" value="UniProtKB-UniRule"/>
</dbReference>
<dbReference type="FunFam" id="1.10.10.410:FF:000001">
    <property type="entry name" value="Aspartyl/glutamyl-tRNA(Asn/Gln) amidotransferase subunit B"/>
    <property type="match status" value="1"/>
</dbReference>
<dbReference type="FunFam" id="1.10.150.380:FF:000001">
    <property type="entry name" value="Aspartyl/glutamyl-tRNA(Asn/Gln) amidotransferase subunit B"/>
    <property type="match status" value="1"/>
</dbReference>
<dbReference type="Gene3D" id="1.10.10.410">
    <property type="match status" value="1"/>
</dbReference>
<dbReference type="Gene3D" id="1.10.150.380">
    <property type="entry name" value="GatB domain, N-terminal subdomain"/>
    <property type="match status" value="1"/>
</dbReference>
<dbReference type="HAMAP" id="MF_00121">
    <property type="entry name" value="GatB"/>
    <property type="match status" value="1"/>
</dbReference>
<dbReference type="InterPro" id="IPR017959">
    <property type="entry name" value="Asn/Gln-tRNA_amidoTrfase_suB/E"/>
</dbReference>
<dbReference type="InterPro" id="IPR006075">
    <property type="entry name" value="Asn/Gln-tRNA_Trfase_suB/E_cat"/>
</dbReference>
<dbReference type="InterPro" id="IPR018027">
    <property type="entry name" value="Asn/Gln_amidotransferase"/>
</dbReference>
<dbReference type="InterPro" id="IPR003789">
    <property type="entry name" value="Asn/Gln_tRNA_amidoTrase-B-like"/>
</dbReference>
<dbReference type="InterPro" id="IPR004413">
    <property type="entry name" value="GatB"/>
</dbReference>
<dbReference type="InterPro" id="IPR042114">
    <property type="entry name" value="GatB_C_1"/>
</dbReference>
<dbReference type="InterPro" id="IPR023168">
    <property type="entry name" value="GatB_Yqey_C_2"/>
</dbReference>
<dbReference type="InterPro" id="IPR017958">
    <property type="entry name" value="Gln-tRNA_amidoTrfase_suB_CS"/>
</dbReference>
<dbReference type="InterPro" id="IPR014746">
    <property type="entry name" value="Gln_synth/guanido_kin_cat_dom"/>
</dbReference>
<dbReference type="NCBIfam" id="TIGR00133">
    <property type="entry name" value="gatB"/>
    <property type="match status" value="1"/>
</dbReference>
<dbReference type="NCBIfam" id="NF004012">
    <property type="entry name" value="PRK05477.1-2"/>
    <property type="match status" value="1"/>
</dbReference>
<dbReference type="NCBIfam" id="NF004014">
    <property type="entry name" value="PRK05477.1-4"/>
    <property type="match status" value="1"/>
</dbReference>
<dbReference type="NCBIfam" id="NF004015">
    <property type="entry name" value="PRK05477.1-5"/>
    <property type="match status" value="1"/>
</dbReference>
<dbReference type="PANTHER" id="PTHR11659">
    <property type="entry name" value="GLUTAMYL-TRNA GLN AMIDOTRANSFERASE SUBUNIT B MITOCHONDRIAL AND PROKARYOTIC PET112-RELATED"/>
    <property type="match status" value="1"/>
</dbReference>
<dbReference type="PANTHER" id="PTHR11659:SF0">
    <property type="entry name" value="GLUTAMYL-TRNA(GLN) AMIDOTRANSFERASE SUBUNIT B, MITOCHONDRIAL"/>
    <property type="match status" value="1"/>
</dbReference>
<dbReference type="Pfam" id="PF02934">
    <property type="entry name" value="GatB_N"/>
    <property type="match status" value="1"/>
</dbReference>
<dbReference type="Pfam" id="PF02637">
    <property type="entry name" value="GatB_Yqey"/>
    <property type="match status" value="1"/>
</dbReference>
<dbReference type="SMART" id="SM00845">
    <property type="entry name" value="GatB_Yqey"/>
    <property type="match status" value="1"/>
</dbReference>
<dbReference type="SUPFAM" id="SSF89095">
    <property type="entry name" value="GatB/YqeY motif"/>
    <property type="match status" value="1"/>
</dbReference>
<dbReference type="SUPFAM" id="SSF55931">
    <property type="entry name" value="Glutamine synthetase/guanido kinase"/>
    <property type="match status" value="1"/>
</dbReference>
<dbReference type="PROSITE" id="PS01234">
    <property type="entry name" value="GATB"/>
    <property type="match status" value="1"/>
</dbReference>
<feature type="chain" id="PRO_1000095181" description="Aspartyl/glutamyl-tRNA(Asn/Gln) amidotransferase subunit B">
    <location>
        <begin position="1"/>
        <end position="492"/>
    </location>
</feature>
<protein>
    <recommendedName>
        <fullName evidence="1">Aspartyl/glutamyl-tRNA(Asn/Gln) amidotransferase subunit B</fullName>
        <shortName evidence="1">Asp/Glu-ADT subunit B</shortName>
        <ecNumber evidence="1">6.3.5.-</ecNumber>
    </recommendedName>
</protein>
<gene>
    <name evidence="1" type="primary">gatB</name>
    <name type="ordered locus">AZC_2847</name>
</gene>
<organism>
    <name type="scientific">Azorhizobium caulinodans (strain ATCC 43989 / DSM 5975 / JCM 20966 / LMG 6465 / NBRC 14845 / NCIMB 13405 / ORS 571)</name>
    <dbReference type="NCBI Taxonomy" id="438753"/>
    <lineage>
        <taxon>Bacteria</taxon>
        <taxon>Pseudomonadati</taxon>
        <taxon>Pseudomonadota</taxon>
        <taxon>Alphaproteobacteria</taxon>
        <taxon>Hyphomicrobiales</taxon>
        <taxon>Xanthobacteraceae</taxon>
        <taxon>Azorhizobium</taxon>
    </lineage>
</organism>
<evidence type="ECO:0000255" key="1">
    <source>
        <dbReference type="HAMAP-Rule" id="MF_00121"/>
    </source>
</evidence>
<keyword id="KW-0067">ATP-binding</keyword>
<keyword id="KW-0436">Ligase</keyword>
<keyword id="KW-0547">Nucleotide-binding</keyword>
<keyword id="KW-0648">Protein biosynthesis</keyword>
<keyword id="KW-1185">Reference proteome</keyword>
<proteinExistence type="inferred from homology"/>